<evidence type="ECO:0000255" key="1">
    <source>
        <dbReference type="HAMAP-Rule" id="MF_00208"/>
    </source>
</evidence>
<reference key="1">
    <citation type="submission" date="2006-08" db="EMBL/GenBank/DDBJ databases">
        <title>Complete sequence of Alkalilimnicola ehrilichei MLHE-1.</title>
        <authorList>
            <person name="Copeland A."/>
            <person name="Lucas S."/>
            <person name="Lapidus A."/>
            <person name="Barry K."/>
            <person name="Detter J.C."/>
            <person name="Glavina del Rio T."/>
            <person name="Hammon N."/>
            <person name="Israni S."/>
            <person name="Dalin E."/>
            <person name="Tice H."/>
            <person name="Pitluck S."/>
            <person name="Sims D."/>
            <person name="Brettin T."/>
            <person name="Bruce D."/>
            <person name="Han C."/>
            <person name="Tapia R."/>
            <person name="Gilna P."/>
            <person name="Schmutz J."/>
            <person name="Larimer F."/>
            <person name="Land M."/>
            <person name="Hauser L."/>
            <person name="Kyrpides N."/>
            <person name="Mikhailova N."/>
            <person name="Oremland R.S."/>
            <person name="Hoeft S.E."/>
            <person name="Switzer-Blum J."/>
            <person name="Kulp T."/>
            <person name="King G."/>
            <person name="Tabita R."/>
            <person name="Witte B."/>
            <person name="Santini J.M."/>
            <person name="Basu P."/>
            <person name="Hollibaugh J.T."/>
            <person name="Xie G."/>
            <person name="Stolz J.F."/>
            <person name="Richardson P."/>
        </authorList>
    </citation>
    <scope>NUCLEOTIDE SEQUENCE [LARGE SCALE GENOMIC DNA]</scope>
    <source>
        <strain>ATCC BAA-1101 / DSM 17681 / MLHE-1</strain>
    </source>
</reference>
<accession>Q0A6J7</accession>
<gene>
    <name evidence="1" type="primary">murE</name>
    <name type="ordered locus">Mlg_2198</name>
</gene>
<dbReference type="EC" id="6.3.2.13" evidence="1"/>
<dbReference type="EMBL" id="CP000453">
    <property type="protein sequence ID" value="ABI57540.1"/>
    <property type="molecule type" value="Genomic_DNA"/>
</dbReference>
<dbReference type="RefSeq" id="WP_011629934.1">
    <property type="nucleotide sequence ID" value="NC_008340.1"/>
</dbReference>
<dbReference type="SMR" id="Q0A6J7"/>
<dbReference type="KEGG" id="aeh:Mlg_2198"/>
<dbReference type="eggNOG" id="COG0769">
    <property type="taxonomic scope" value="Bacteria"/>
</dbReference>
<dbReference type="HOGENOM" id="CLU_022291_4_1_6"/>
<dbReference type="OrthoDB" id="9800958at2"/>
<dbReference type="UniPathway" id="UPA00219"/>
<dbReference type="Proteomes" id="UP000001962">
    <property type="component" value="Chromosome"/>
</dbReference>
<dbReference type="GO" id="GO:0005737">
    <property type="term" value="C:cytoplasm"/>
    <property type="evidence" value="ECO:0007669"/>
    <property type="project" value="UniProtKB-SubCell"/>
</dbReference>
<dbReference type="GO" id="GO:0005524">
    <property type="term" value="F:ATP binding"/>
    <property type="evidence" value="ECO:0007669"/>
    <property type="project" value="UniProtKB-UniRule"/>
</dbReference>
<dbReference type="GO" id="GO:0000287">
    <property type="term" value="F:magnesium ion binding"/>
    <property type="evidence" value="ECO:0007669"/>
    <property type="project" value="UniProtKB-UniRule"/>
</dbReference>
<dbReference type="GO" id="GO:0008765">
    <property type="term" value="F:UDP-N-acetylmuramoylalanyl-D-glutamate-2,6-diaminopimelate ligase activity"/>
    <property type="evidence" value="ECO:0007669"/>
    <property type="project" value="UniProtKB-UniRule"/>
</dbReference>
<dbReference type="GO" id="GO:0051301">
    <property type="term" value="P:cell division"/>
    <property type="evidence" value="ECO:0007669"/>
    <property type="project" value="UniProtKB-KW"/>
</dbReference>
<dbReference type="GO" id="GO:0071555">
    <property type="term" value="P:cell wall organization"/>
    <property type="evidence" value="ECO:0007669"/>
    <property type="project" value="UniProtKB-KW"/>
</dbReference>
<dbReference type="GO" id="GO:0009252">
    <property type="term" value="P:peptidoglycan biosynthetic process"/>
    <property type="evidence" value="ECO:0007669"/>
    <property type="project" value="UniProtKB-UniRule"/>
</dbReference>
<dbReference type="GO" id="GO:0008360">
    <property type="term" value="P:regulation of cell shape"/>
    <property type="evidence" value="ECO:0007669"/>
    <property type="project" value="UniProtKB-KW"/>
</dbReference>
<dbReference type="Gene3D" id="3.90.190.20">
    <property type="entry name" value="Mur ligase, C-terminal domain"/>
    <property type="match status" value="1"/>
</dbReference>
<dbReference type="Gene3D" id="3.40.1190.10">
    <property type="entry name" value="Mur-like, catalytic domain"/>
    <property type="match status" value="1"/>
</dbReference>
<dbReference type="Gene3D" id="3.40.1390.10">
    <property type="entry name" value="MurE/MurF, N-terminal domain"/>
    <property type="match status" value="1"/>
</dbReference>
<dbReference type="HAMAP" id="MF_00208">
    <property type="entry name" value="MurE"/>
    <property type="match status" value="1"/>
</dbReference>
<dbReference type="InterPro" id="IPR036565">
    <property type="entry name" value="Mur-like_cat_sf"/>
</dbReference>
<dbReference type="InterPro" id="IPR004101">
    <property type="entry name" value="Mur_ligase_C"/>
</dbReference>
<dbReference type="InterPro" id="IPR036615">
    <property type="entry name" value="Mur_ligase_C_dom_sf"/>
</dbReference>
<dbReference type="InterPro" id="IPR013221">
    <property type="entry name" value="Mur_ligase_cen"/>
</dbReference>
<dbReference type="InterPro" id="IPR000713">
    <property type="entry name" value="Mur_ligase_N"/>
</dbReference>
<dbReference type="InterPro" id="IPR035911">
    <property type="entry name" value="MurE/MurF_N"/>
</dbReference>
<dbReference type="InterPro" id="IPR005761">
    <property type="entry name" value="UDP-N-AcMur-Glu-dNH2Pim_ligase"/>
</dbReference>
<dbReference type="NCBIfam" id="TIGR01085">
    <property type="entry name" value="murE"/>
    <property type="match status" value="1"/>
</dbReference>
<dbReference type="NCBIfam" id="NF001124">
    <property type="entry name" value="PRK00139.1-2"/>
    <property type="match status" value="1"/>
</dbReference>
<dbReference type="NCBIfam" id="NF001126">
    <property type="entry name" value="PRK00139.1-4"/>
    <property type="match status" value="1"/>
</dbReference>
<dbReference type="PANTHER" id="PTHR23135">
    <property type="entry name" value="MUR LIGASE FAMILY MEMBER"/>
    <property type="match status" value="1"/>
</dbReference>
<dbReference type="PANTHER" id="PTHR23135:SF4">
    <property type="entry name" value="UDP-N-ACETYLMURAMOYL-L-ALANYL-D-GLUTAMATE--2,6-DIAMINOPIMELATE LIGASE MURE HOMOLOG, CHLOROPLASTIC"/>
    <property type="match status" value="1"/>
</dbReference>
<dbReference type="Pfam" id="PF01225">
    <property type="entry name" value="Mur_ligase"/>
    <property type="match status" value="1"/>
</dbReference>
<dbReference type="Pfam" id="PF02875">
    <property type="entry name" value="Mur_ligase_C"/>
    <property type="match status" value="1"/>
</dbReference>
<dbReference type="Pfam" id="PF08245">
    <property type="entry name" value="Mur_ligase_M"/>
    <property type="match status" value="1"/>
</dbReference>
<dbReference type="SUPFAM" id="SSF53623">
    <property type="entry name" value="MurD-like peptide ligases, catalytic domain"/>
    <property type="match status" value="1"/>
</dbReference>
<dbReference type="SUPFAM" id="SSF53244">
    <property type="entry name" value="MurD-like peptide ligases, peptide-binding domain"/>
    <property type="match status" value="1"/>
</dbReference>
<dbReference type="SUPFAM" id="SSF63418">
    <property type="entry name" value="MurE/MurF N-terminal domain"/>
    <property type="match status" value="1"/>
</dbReference>
<comment type="function">
    <text evidence="1">Catalyzes the addition of meso-diaminopimelic acid to the nucleotide precursor UDP-N-acetylmuramoyl-L-alanyl-D-glutamate (UMAG) in the biosynthesis of bacterial cell-wall peptidoglycan.</text>
</comment>
<comment type="catalytic activity">
    <reaction evidence="1">
        <text>UDP-N-acetyl-alpha-D-muramoyl-L-alanyl-D-glutamate + meso-2,6-diaminopimelate + ATP = UDP-N-acetyl-alpha-D-muramoyl-L-alanyl-gamma-D-glutamyl-meso-2,6-diaminopimelate + ADP + phosphate + H(+)</text>
        <dbReference type="Rhea" id="RHEA:23676"/>
        <dbReference type="ChEBI" id="CHEBI:15378"/>
        <dbReference type="ChEBI" id="CHEBI:30616"/>
        <dbReference type="ChEBI" id="CHEBI:43474"/>
        <dbReference type="ChEBI" id="CHEBI:57791"/>
        <dbReference type="ChEBI" id="CHEBI:83900"/>
        <dbReference type="ChEBI" id="CHEBI:83905"/>
        <dbReference type="ChEBI" id="CHEBI:456216"/>
        <dbReference type="EC" id="6.3.2.13"/>
    </reaction>
</comment>
<comment type="cofactor">
    <cofactor evidence="1">
        <name>Mg(2+)</name>
        <dbReference type="ChEBI" id="CHEBI:18420"/>
    </cofactor>
</comment>
<comment type="pathway">
    <text evidence="1">Cell wall biogenesis; peptidoglycan biosynthesis.</text>
</comment>
<comment type="subcellular location">
    <subcellularLocation>
        <location evidence="1">Cytoplasm</location>
    </subcellularLocation>
</comment>
<comment type="PTM">
    <text evidence="1">Carboxylation is probably crucial for Mg(2+) binding and, consequently, for the gamma-phosphate positioning of ATP.</text>
</comment>
<comment type="similarity">
    <text evidence="1">Belongs to the MurCDEF family. MurE subfamily.</text>
</comment>
<feature type="chain" id="PRO_1000058584" description="UDP-N-acetylmuramoyl-L-alanyl-D-glutamate--2,6-diaminopimelate ligase">
    <location>
        <begin position="1"/>
        <end position="498"/>
    </location>
</feature>
<feature type="short sequence motif" description="Meso-diaminopimelate recognition motif">
    <location>
        <begin position="416"/>
        <end position="419"/>
    </location>
</feature>
<feature type="binding site" evidence="1">
    <location>
        <position position="29"/>
    </location>
    <ligand>
        <name>UDP-N-acetyl-alpha-D-muramoyl-L-alanyl-D-glutamate</name>
        <dbReference type="ChEBI" id="CHEBI:83900"/>
    </ligand>
</feature>
<feature type="binding site" evidence="1">
    <location>
        <begin position="120"/>
        <end position="126"/>
    </location>
    <ligand>
        <name>ATP</name>
        <dbReference type="ChEBI" id="CHEBI:30616"/>
    </ligand>
</feature>
<feature type="binding site" evidence="1">
    <location>
        <begin position="162"/>
        <end position="163"/>
    </location>
    <ligand>
        <name>UDP-N-acetyl-alpha-D-muramoyl-L-alanyl-D-glutamate</name>
        <dbReference type="ChEBI" id="CHEBI:83900"/>
    </ligand>
</feature>
<feature type="binding site" evidence="1">
    <location>
        <position position="189"/>
    </location>
    <ligand>
        <name>UDP-N-acetyl-alpha-D-muramoyl-L-alanyl-D-glutamate</name>
        <dbReference type="ChEBI" id="CHEBI:83900"/>
    </ligand>
</feature>
<feature type="binding site" evidence="1">
    <location>
        <position position="195"/>
    </location>
    <ligand>
        <name>UDP-N-acetyl-alpha-D-muramoyl-L-alanyl-D-glutamate</name>
        <dbReference type="ChEBI" id="CHEBI:83900"/>
    </ligand>
</feature>
<feature type="binding site" evidence="1">
    <location>
        <position position="197"/>
    </location>
    <ligand>
        <name>UDP-N-acetyl-alpha-D-muramoyl-L-alanyl-D-glutamate</name>
        <dbReference type="ChEBI" id="CHEBI:83900"/>
    </ligand>
</feature>
<feature type="binding site" evidence="1">
    <location>
        <position position="392"/>
    </location>
    <ligand>
        <name>meso-2,6-diaminopimelate</name>
        <dbReference type="ChEBI" id="CHEBI:57791"/>
    </ligand>
</feature>
<feature type="binding site" evidence="1">
    <location>
        <begin position="416"/>
        <end position="419"/>
    </location>
    <ligand>
        <name>meso-2,6-diaminopimelate</name>
        <dbReference type="ChEBI" id="CHEBI:57791"/>
    </ligand>
</feature>
<feature type="binding site" evidence="1">
    <location>
        <position position="466"/>
    </location>
    <ligand>
        <name>meso-2,6-diaminopimelate</name>
        <dbReference type="ChEBI" id="CHEBI:57791"/>
    </ligand>
</feature>
<feature type="binding site" evidence="1">
    <location>
        <position position="470"/>
    </location>
    <ligand>
        <name>meso-2,6-diaminopimelate</name>
        <dbReference type="ChEBI" id="CHEBI:57791"/>
    </ligand>
</feature>
<feature type="modified residue" description="N6-carboxylysine" evidence="1">
    <location>
        <position position="229"/>
    </location>
</feature>
<proteinExistence type="inferred from homology"/>
<keyword id="KW-0067">ATP-binding</keyword>
<keyword id="KW-0131">Cell cycle</keyword>
<keyword id="KW-0132">Cell division</keyword>
<keyword id="KW-0133">Cell shape</keyword>
<keyword id="KW-0961">Cell wall biogenesis/degradation</keyword>
<keyword id="KW-0963">Cytoplasm</keyword>
<keyword id="KW-0436">Ligase</keyword>
<keyword id="KW-0460">Magnesium</keyword>
<keyword id="KW-0547">Nucleotide-binding</keyword>
<keyword id="KW-0573">Peptidoglycan synthesis</keyword>
<keyword id="KW-1185">Reference proteome</keyword>
<sequence length="498" mass="52734">MMRLRTLLQPWLDLTDADDRPVGGLAVDSRDIEPGFVFVALRGSRHHGLGYLGDALAAGAGAVLWEPAGDVAPEPDERTAAERAGVPLIAVPDLGRRLGPIAARLYGDPSARMRVVGVTGTDGKTSVTQYLAQLLDREAHRCGLVGTLGSGFPDSLQPGTHTTPDAASVQRTLARLHRQGAAQVAMEVSSHALDQHRVAGVRFHTAVLTNLGRDHLDYHGDLAGYAEAKSRLFGVPGLQWAVLNLDDAFGRQVHGALAGGTRALGYSLAGHPQAGVRGEGLVLEPQGLRLRLSTEWGEAPVQAPLLGAFNAANVLAVAAAALSLGVALPVIVERLAGLRPVPGRMEPFTRPGRPSVIVDYAHTPAALRGALAAVRAHYRGAVWLVFGCGGDRDRGKRPLMGEAAAELADRVVLTDDNPRREDPDRIIDDIRQGAPGRDWPVLRDRAGAIRHAVERAGPEDVVLVAGKGHETVQQIGDRCLPFSDREAVVQALGEEEGA</sequence>
<organism>
    <name type="scientific">Alkalilimnicola ehrlichii (strain ATCC BAA-1101 / DSM 17681 / MLHE-1)</name>
    <dbReference type="NCBI Taxonomy" id="187272"/>
    <lineage>
        <taxon>Bacteria</taxon>
        <taxon>Pseudomonadati</taxon>
        <taxon>Pseudomonadota</taxon>
        <taxon>Gammaproteobacteria</taxon>
        <taxon>Chromatiales</taxon>
        <taxon>Ectothiorhodospiraceae</taxon>
        <taxon>Alkalilimnicola</taxon>
    </lineage>
</organism>
<name>MURE_ALKEH</name>
<protein>
    <recommendedName>
        <fullName evidence="1">UDP-N-acetylmuramoyl-L-alanyl-D-glutamate--2,6-diaminopimelate ligase</fullName>
        <ecNumber evidence="1">6.3.2.13</ecNumber>
    </recommendedName>
    <alternativeName>
        <fullName evidence="1">Meso-A2pm-adding enzyme</fullName>
    </alternativeName>
    <alternativeName>
        <fullName evidence="1">Meso-diaminopimelate-adding enzyme</fullName>
    </alternativeName>
    <alternativeName>
        <fullName evidence="1">UDP-MurNAc-L-Ala-D-Glu:meso-diaminopimelate ligase</fullName>
    </alternativeName>
    <alternativeName>
        <fullName evidence="1">UDP-MurNAc-tripeptide synthetase</fullName>
    </alternativeName>
    <alternativeName>
        <fullName evidence="1">UDP-N-acetylmuramyl-tripeptide synthetase</fullName>
    </alternativeName>
</protein>